<dbReference type="EMBL" id="L10328">
    <property type="protein sequence ID" value="AAA62041.1"/>
    <property type="status" value="ALT_INIT"/>
    <property type="molecule type" value="Genomic_DNA"/>
</dbReference>
<dbReference type="EMBL" id="U00096">
    <property type="protein sequence ID" value="AAC76712.3"/>
    <property type="molecule type" value="Genomic_DNA"/>
</dbReference>
<dbReference type="EMBL" id="AP009048">
    <property type="protein sequence ID" value="BAE77605.1"/>
    <property type="status" value="ALT_INIT"/>
    <property type="molecule type" value="Genomic_DNA"/>
</dbReference>
<dbReference type="PIR" id="B65171">
    <property type="entry name" value="B65171"/>
</dbReference>
<dbReference type="RefSeq" id="NP_418144.3">
    <property type="nucleotide sequence ID" value="NC_000913.3"/>
</dbReference>
<dbReference type="BioGRID" id="4262576">
    <property type="interactions" value="3"/>
</dbReference>
<dbReference type="DIP" id="DIP-12454N"/>
<dbReference type="FunCoup" id="P31455">
    <property type="interactions" value="12"/>
</dbReference>
<dbReference type="STRING" id="511145.b3689"/>
<dbReference type="jPOST" id="P31455"/>
<dbReference type="PaxDb" id="511145-b3689"/>
<dbReference type="EnsemblBacteria" id="AAC76712">
    <property type="protein sequence ID" value="AAC76712"/>
    <property type="gene ID" value="b3689"/>
</dbReference>
<dbReference type="GeneID" id="948198"/>
<dbReference type="KEGG" id="ecj:JW5860"/>
<dbReference type="KEGG" id="eco:b3689"/>
<dbReference type="PATRIC" id="fig|511145.12.peg.3812"/>
<dbReference type="EchoBASE" id="EB1664"/>
<dbReference type="eggNOG" id="COG0823">
    <property type="taxonomic scope" value="Bacteria"/>
</dbReference>
<dbReference type="HOGENOM" id="CLU_054731_0_0_6"/>
<dbReference type="InParanoid" id="P31455"/>
<dbReference type="OrthoDB" id="626010at2"/>
<dbReference type="PhylomeDB" id="P31455"/>
<dbReference type="BioCyc" id="EcoCyc:EG11713-MONOMER"/>
<dbReference type="PRO" id="PR:P31455"/>
<dbReference type="Proteomes" id="UP000000625">
    <property type="component" value="Chromosome"/>
</dbReference>
<dbReference type="GO" id="GO:0046397">
    <property type="term" value="P:galacturonate catabolic process"/>
    <property type="evidence" value="ECO:0000315"/>
    <property type="project" value="EcoCyc"/>
</dbReference>
<dbReference type="FunFam" id="2.120.10.30:FF:000090">
    <property type="entry name" value="Putative Dipeptidyl aminopeptidases /acylaminoacyl-peptidase"/>
    <property type="match status" value="1"/>
</dbReference>
<dbReference type="Gene3D" id="2.120.10.30">
    <property type="entry name" value="TolB, C-terminal domain"/>
    <property type="match status" value="1"/>
</dbReference>
<dbReference type="InterPro" id="IPR011042">
    <property type="entry name" value="6-blade_b-propeller_TolB-like"/>
</dbReference>
<dbReference type="InterPro" id="IPR022223">
    <property type="entry name" value="DUF3748"/>
</dbReference>
<dbReference type="InterPro" id="IPR011659">
    <property type="entry name" value="PD40"/>
</dbReference>
<dbReference type="Pfam" id="PF12566">
    <property type="entry name" value="DUF3748"/>
    <property type="match status" value="1"/>
</dbReference>
<dbReference type="Pfam" id="PF07676">
    <property type="entry name" value="PD40"/>
    <property type="match status" value="1"/>
</dbReference>
<dbReference type="SUPFAM" id="SSF82171">
    <property type="entry name" value="DPP6 N-terminal domain-like"/>
    <property type="match status" value="1"/>
</dbReference>
<accession>P31455</accession>
<accession>P76734</accession>
<accession>Q2M801</accession>
<sequence>MAGPVLYQDRAMKQITFAPRNHLLTNTNTWTPDSQWLVFDVRPSGASFTGETIERVNIHTGEVEVIYRASQGAHVGVVTVHPKSEKYVFIHGPENPDETWHYDFHHRRGVIVEGGKMSNLDAMDITAPYTPGVLRGGSHVHVFSPNGERVSFTYNDHVMHELDPALDLRNVGVAAPFGPVNVQKQHPREYSGSHWCVLVSKTTPTPQPGSDEINRAYEEGWVGNHALAFIGDTLSPKGEKVPELFIVELPQDEAGWKAAGDAPLSGTETTLPAPPRGVVQRRLTFTHHRAYPGLVNVPRHWVRCNPQGTQIAFLMRDDNGIVQLWLISPQGGEPRQLTHNKTDIQSAFNWHPSGEWLGFVLDNRIACAHAQSGEVEYLTEHHANSPSADAVVFSPDGQWLAWMEGGQLWITETDR</sequence>
<organism>
    <name type="scientific">Escherichia coli (strain K12)</name>
    <dbReference type="NCBI Taxonomy" id="83333"/>
    <lineage>
        <taxon>Bacteria</taxon>
        <taxon>Pseudomonadati</taxon>
        <taxon>Pseudomonadota</taxon>
        <taxon>Gammaproteobacteria</taxon>
        <taxon>Enterobacterales</taxon>
        <taxon>Enterobacteriaceae</taxon>
        <taxon>Escherichia</taxon>
    </lineage>
</organism>
<name>YIDR_ECOLI</name>
<gene>
    <name type="primary">yidR</name>
    <name type="ordered locus">b3689</name>
    <name type="ordered locus">JW5860</name>
</gene>
<evidence type="ECO:0000305" key="1"/>
<protein>
    <recommendedName>
        <fullName>Uncharacterized protein YidR</fullName>
    </recommendedName>
</protein>
<proteinExistence type="predicted"/>
<feature type="chain" id="PRO_0000169633" description="Uncharacterized protein YidR">
    <location>
        <begin position="1"/>
        <end position="415"/>
    </location>
</feature>
<keyword id="KW-1185">Reference proteome</keyword>
<comment type="sequence caution" evidence="1">
    <conflict type="erroneous initiation">
        <sequence resource="EMBL-CDS" id="AAA62041"/>
    </conflict>
    <text>Extended N-terminus.</text>
</comment>
<comment type="sequence caution" evidence="1">
    <conflict type="erroneous initiation">
        <sequence resource="EMBL-CDS" id="BAE77605"/>
    </conflict>
    <text>Truncated N-terminus.</text>
</comment>
<reference key="1">
    <citation type="journal article" date="1993" name="Genomics">
        <title>DNA sequence and analysis of 136 kilobases of the Escherichia coli genome: organizational symmetry around the origin of replication.</title>
        <authorList>
            <person name="Burland V.D."/>
            <person name="Plunkett G. III"/>
            <person name="Daniels D.L."/>
            <person name="Blattner F.R."/>
        </authorList>
    </citation>
    <scope>NUCLEOTIDE SEQUENCE [LARGE SCALE GENOMIC DNA]</scope>
    <source>
        <strain>K12 / MG1655 / ATCC 47076</strain>
    </source>
</reference>
<reference key="2">
    <citation type="journal article" date="1997" name="Science">
        <title>The complete genome sequence of Escherichia coli K-12.</title>
        <authorList>
            <person name="Blattner F.R."/>
            <person name="Plunkett G. III"/>
            <person name="Bloch C.A."/>
            <person name="Perna N.T."/>
            <person name="Burland V."/>
            <person name="Riley M."/>
            <person name="Collado-Vides J."/>
            <person name="Glasner J.D."/>
            <person name="Rode C.K."/>
            <person name="Mayhew G.F."/>
            <person name="Gregor J."/>
            <person name="Davis N.W."/>
            <person name="Kirkpatrick H.A."/>
            <person name="Goeden M.A."/>
            <person name="Rose D.J."/>
            <person name="Mau B."/>
            <person name="Shao Y."/>
        </authorList>
    </citation>
    <scope>NUCLEOTIDE SEQUENCE [LARGE SCALE GENOMIC DNA]</scope>
    <source>
        <strain>K12 / MG1655 / ATCC 47076</strain>
    </source>
</reference>
<reference key="3">
    <citation type="journal article" date="2006" name="Mol. Syst. Biol.">
        <title>Highly accurate genome sequences of Escherichia coli K-12 strains MG1655 and W3110.</title>
        <authorList>
            <person name="Hayashi K."/>
            <person name="Morooka N."/>
            <person name="Yamamoto Y."/>
            <person name="Fujita K."/>
            <person name="Isono K."/>
            <person name="Choi S."/>
            <person name="Ohtsubo E."/>
            <person name="Baba T."/>
            <person name="Wanner B.L."/>
            <person name="Mori H."/>
            <person name="Horiuchi T."/>
        </authorList>
    </citation>
    <scope>NUCLEOTIDE SEQUENCE [LARGE SCALE GENOMIC DNA]</scope>
    <source>
        <strain>K12 / W3110 / ATCC 27325 / DSM 5911</strain>
    </source>
</reference>